<name>YB92_SCHPO</name>
<reference key="1">
    <citation type="journal article" date="2002" name="Nature">
        <title>The genome sequence of Schizosaccharomyces pombe.</title>
        <authorList>
            <person name="Wood V."/>
            <person name="Gwilliam R."/>
            <person name="Rajandream M.A."/>
            <person name="Lyne M.H."/>
            <person name="Lyne R."/>
            <person name="Stewart A."/>
            <person name="Sgouros J.G."/>
            <person name="Peat N."/>
            <person name="Hayles J."/>
            <person name="Baker S.G."/>
            <person name="Basham D."/>
            <person name="Bowman S."/>
            <person name="Brooks K."/>
            <person name="Brown D."/>
            <person name="Brown S."/>
            <person name="Chillingworth T."/>
            <person name="Churcher C.M."/>
            <person name="Collins M."/>
            <person name="Connor R."/>
            <person name="Cronin A."/>
            <person name="Davis P."/>
            <person name="Feltwell T."/>
            <person name="Fraser A."/>
            <person name="Gentles S."/>
            <person name="Goble A."/>
            <person name="Hamlin N."/>
            <person name="Harris D.E."/>
            <person name="Hidalgo J."/>
            <person name="Hodgson G."/>
            <person name="Holroyd S."/>
            <person name="Hornsby T."/>
            <person name="Howarth S."/>
            <person name="Huckle E.J."/>
            <person name="Hunt S."/>
            <person name="Jagels K."/>
            <person name="James K.D."/>
            <person name="Jones L."/>
            <person name="Jones M."/>
            <person name="Leather S."/>
            <person name="McDonald S."/>
            <person name="McLean J."/>
            <person name="Mooney P."/>
            <person name="Moule S."/>
            <person name="Mungall K.L."/>
            <person name="Murphy L.D."/>
            <person name="Niblett D."/>
            <person name="Odell C."/>
            <person name="Oliver K."/>
            <person name="O'Neil S."/>
            <person name="Pearson D."/>
            <person name="Quail M.A."/>
            <person name="Rabbinowitsch E."/>
            <person name="Rutherford K.M."/>
            <person name="Rutter S."/>
            <person name="Saunders D."/>
            <person name="Seeger K."/>
            <person name="Sharp S."/>
            <person name="Skelton J."/>
            <person name="Simmonds M.N."/>
            <person name="Squares R."/>
            <person name="Squares S."/>
            <person name="Stevens K."/>
            <person name="Taylor K."/>
            <person name="Taylor R.G."/>
            <person name="Tivey A."/>
            <person name="Walsh S.V."/>
            <person name="Warren T."/>
            <person name="Whitehead S."/>
            <person name="Woodward J.R."/>
            <person name="Volckaert G."/>
            <person name="Aert R."/>
            <person name="Robben J."/>
            <person name="Grymonprez B."/>
            <person name="Weltjens I."/>
            <person name="Vanstreels E."/>
            <person name="Rieger M."/>
            <person name="Schaefer M."/>
            <person name="Mueller-Auer S."/>
            <person name="Gabel C."/>
            <person name="Fuchs M."/>
            <person name="Duesterhoeft A."/>
            <person name="Fritzc C."/>
            <person name="Holzer E."/>
            <person name="Moestl D."/>
            <person name="Hilbert H."/>
            <person name="Borzym K."/>
            <person name="Langer I."/>
            <person name="Beck A."/>
            <person name="Lehrach H."/>
            <person name="Reinhardt R."/>
            <person name="Pohl T.M."/>
            <person name="Eger P."/>
            <person name="Zimmermann W."/>
            <person name="Wedler H."/>
            <person name="Wambutt R."/>
            <person name="Purnelle B."/>
            <person name="Goffeau A."/>
            <person name="Cadieu E."/>
            <person name="Dreano S."/>
            <person name="Gloux S."/>
            <person name="Lelaure V."/>
            <person name="Mottier S."/>
            <person name="Galibert F."/>
            <person name="Aves S.J."/>
            <person name="Xiang Z."/>
            <person name="Hunt C."/>
            <person name="Moore K."/>
            <person name="Hurst S.M."/>
            <person name="Lucas M."/>
            <person name="Rochet M."/>
            <person name="Gaillardin C."/>
            <person name="Tallada V.A."/>
            <person name="Garzon A."/>
            <person name="Thode G."/>
            <person name="Daga R.R."/>
            <person name="Cruzado L."/>
            <person name="Jimenez J."/>
            <person name="Sanchez M."/>
            <person name="del Rey F."/>
            <person name="Benito J."/>
            <person name="Dominguez A."/>
            <person name="Revuelta J.L."/>
            <person name="Moreno S."/>
            <person name="Armstrong J."/>
            <person name="Forsburg S.L."/>
            <person name="Cerutti L."/>
            <person name="Lowe T."/>
            <person name="McCombie W.R."/>
            <person name="Paulsen I."/>
            <person name="Potashkin J."/>
            <person name="Shpakovski G.V."/>
            <person name="Ussery D."/>
            <person name="Barrell B.G."/>
            <person name="Nurse P."/>
        </authorList>
    </citation>
    <scope>NUCLEOTIDE SEQUENCE [LARGE SCALE GENOMIC DNA]</scope>
    <source>
        <strain>972 / ATCC 24843</strain>
    </source>
</reference>
<reference key="2">
    <citation type="journal article" date="2006" name="Nat. Biotechnol.">
        <title>ORFeome cloning and global analysis of protein localization in the fission yeast Schizosaccharomyces pombe.</title>
        <authorList>
            <person name="Matsuyama A."/>
            <person name="Arai R."/>
            <person name="Yashiroda Y."/>
            <person name="Shirai A."/>
            <person name="Kamata A."/>
            <person name="Sekido S."/>
            <person name="Kobayashi Y."/>
            <person name="Hashimoto A."/>
            <person name="Hamamoto M."/>
            <person name="Hiraoka Y."/>
            <person name="Horinouchi S."/>
            <person name="Yoshida M."/>
        </authorList>
    </citation>
    <scope>SUBCELLULAR LOCATION [LARGE SCALE ANALYSIS]</scope>
</reference>
<reference key="3">
    <citation type="journal article" date="2008" name="J. Proteome Res.">
        <title>Phosphoproteome analysis of fission yeast.</title>
        <authorList>
            <person name="Wilson-Grady J.T."/>
            <person name="Villen J."/>
            <person name="Gygi S.P."/>
        </authorList>
    </citation>
    <scope>PHOSPHORYLATION [LARGE SCALE ANALYSIS] AT THR-566</scope>
    <scope>IDENTIFICATION BY MASS SPECTROMETRY</scope>
</reference>
<organism>
    <name type="scientific">Schizosaccharomyces pombe (strain 972 / ATCC 24843)</name>
    <name type="common">Fission yeast</name>
    <dbReference type="NCBI Taxonomy" id="284812"/>
    <lineage>
        <taxon>Eukaryota</taxon>
        <taxon>Fungi</taxon>
        <taxon>Dikarya</taxon>
        <taxon>Ascomycota</taxon>
        <taxon>Taphrinomycotina</taxon>
        <taxon>Schizosaccharomycetes</taxon>
        <taxon>Schizosaccharomycetales</taxon>
        <taxon>Schizosaccharomycetaceae</taxon>
        <taxon>Schizosaccharomyces</taxon>
    </lineage>
</organism>
<dbReference type="EMBL" id="CU329671">
    <property type="protein sequence ID" value="CAA16835.1"/>
    <property type="molecule type" value="Genomic_DNA"/>
</dbReference>
<dbReference type="PIR" id="T39866">
    <property type="entry name" value="T39866"/>
</dbReference>
<dbReference type="RefSeq" id="NP_595800.1">
    <property type="nucleotide sequence ID" value="NM_001021702.2"/>
</dbReference>
<dbReference type="SMR" id="O42967"/>
<dbReference type="BioGRID" id="277182">
    <property type="interactions" value="7"/>
</dbReference>
<dbReference type="FunCoup" id="O42967">
    <property type="interactions" value="415"/>
</dbReference>
<dbReference type="STRING" id="284812.O42967"/>
<dbReference type="iPTMnet" id="O42967"/>
<dbReference type="PaxDb" id="4896-SPBC1E8.02.1"/>
<dbReference type="EnsemblFungi" id="SPBC1E8.02.1">
    <property type="protein sequence ID" value="SPBC1E8.02.1:pep"/>
    <property type="gene ID" value="SPBC1E8.02"/>
</dbReference>
<dbReference type="PomBase" id="SPBC1E8.02"/>
<dbReference type="VEuPathDB" id="FungiDB:SPBC1E8.02"/>
<dbReference type="eggNOG" id="KOG0010">
    <property type="taxonomic scope" value="Eukaryota"/>
</dbReference>
<dbReference type="HOGENOM" id="CLU_452809_0_0_1"/>
<dbReference type="InParanoid" id="O42967"/>
<dbReference type="OMA" id="QTGECAY"/>
<dbReference type="Reactome" id="R-SPO-8856825">
    <property type="pathway name" value="Cargo recognition for clathrin-mediated endocytosis"/>
</dbReference>
<dbReference type="PRO" id="PR:O42967"/>
<dbReference type="Proteomes" id="UP000002485">
    <property type="component" value="Chromosome II"/>
</dbReference>
<dbReference type="GO" id="GO:0005829">
    <property type="term" value="C:cytosol"/>
    <property type="evidence" value="ECO:0000318"/>
    <property type="project" value="GO_Central"/>
</dbReference>
<dbReference type="GO" id="GO:0005783">
    <property type="term" value="C:endoplasmic reticulum"/>
    <property type="evidence" value="ECO:0007005"/>
    <property type="project" value="PomBase"/>
</dbReference>
<dbReference type="GO" id="GO:0005789">
    <property type="term" value="C:endoplasmic reticulum membrane"/>
    <property type="evidence" value="ECO:0007669"/>
    <property type="project" value="UniProtKB-SubCell"/>
</dbReference>
<dbReference type="GO" id="GO:0031593">
    <property type="term" value="F:polyubiquitin modification-dependent protein binding"/>
    <property type="evidence" value="ECO:0000318"/>
    <property type="project" value="GO_Central"/>
</dbReference>
<dbReference type="GO" id="GO:0006511">
    <property type="term" value="P:ubiquitin-dependent protein catabolic process"/>
    <property type="evidence" value="ECO:0000318"/>
    <property type="project" value="GO_Central"/>
</dbReference>
<dbReference type="CDD" id="cd17039">
    <property type="entry name" value="Ubl_ubiquitin_like"/>
    <property type="match status" value="1"/>
</dbReference>
<dbReference type="Gene3D" id="3.10.20.90">
    <property type="entry name" value="Phosphatidylinositol 3-kinase Catalytic Subunit, Chain A, domain 1"/>
    <property type="match status" value="1"/>
</dbReference>
<dbReference type="InterPro" id="IPR039751">
    <property type="entry name" value="HERPUD1/2"/>
</dbReference>
<dbReference type="InterPro" id="IPR000626">
    <property type="entry name" value="Ubiquitin-like_dom"/>
</dbReference>
<dbReference type="InterPro" id="IPR029071">
    <property type="entry name" value="Ubiquitin-like_domsf"/>
</dbReference>
<dbReference type="PANTHER" id="PTHR12943:SF27">
    <property type="entry name" value="HOMOCYSTEINE-INDUCED ENDOPLASMIC RETICULUM PROTEIN, ISOFORM A"/>
    <property type="match status" value="1"/>
</dbReference>
<dbReference type="PANTHER" id="PTHR12943">
    <property type="entry name" value="HOMOCYSTEINE-RESPONSIVE ENDOPLASMIC RETICULUM-RESIDENT UNIQUITIN-LIKE DOMAIN HERPUD PROTEIN FAMILY MEMBER"/>
    <property type="match status" value="1"/>
</dbReference>
<dbReference type="Pfam" id="PF00240">
    <property type="entry name" value="ubiquitin"/>
    <property type="match status" value="1"/>
</dbReference>
<dbReference type="SMART" id="SM00213">
    <property type="entry name" value="UBQ"/>
    <property type="match status" value="1"/>
</dbReference>
<dbReference type="SUPFAM" id="SSF54236">
    <property type="entry name" value="Ubiquitin-like"/>
    <property type="match status" value="1"/>
</dbReference>
<dbReference type="PROSITE" id="PS50053">
    <property type="entry name" value="UBIQUITIN_2"/>
    <property type="match status" value="1"/>
</dbReference>
<evidence type="ECO:0000255" key="1"/>
<evidence type="ECO:0000255" key="2">
    <source>
        <dbReference type="PROSITE-ProRule" id="PRU00214"/>
    </source>
</evidence>
<evidence type="ECO:0000256" key="3">
    <source>
        <dbReference type="SAM" id="MobiDB-lite"/>
    </source>
</evidence>
<evidence type="ECO:0000269" key="4">
    <source>
    </source>
</evidence>
<evidence type="ECO:0000269" key="5">
    <source>
    </source>
</evidence>
<comment type="subcellular location">
    <subcellularLocation>
        <location evidence="4">Endoplasmic reticulum membrane</location>
        <topology evidence="4">Single-pass membrane protein</topology>
    </subcellularLocation>
</comment>
<gene>
    <name type="ORF">SPBC1E8.02</name>
</gene>
<feature type="chain" id="PRO_0000310777" description="Uncharacterized ubiquitin-like protein C1E8.02">
    <location>
        <begin position="1"/>
        <end position="603"/>
    </location>
</feature>
<feature type="transmembrane region" description="Helical" evidence="1">
    <location>
        <begin position="496"/>
        <end position="516"/>
    </location>
</feature>
<feature type="domain" description="Ubiquitin-like" evidence="2">
    <location>
        <begin position="4"/>
        <end position="79"/>
    </location>
</feature>
<feature type="region of interest" description="Disordered" evidence="3">
    <location>
        <begin position="85"/>
        <end position="121"/>
    </location>
</feature>
<feature type="region of interest" description="Disordered" evidence="3">
    <location>
        <begin position="159"/>
        <end position="178"/>
    </location>
</feature>
<feature type="region of interest" description="Disordered" evidence="3">
    <location>
        <begin position="206"/>
        <end position="348"/>
    </location>
</feature>
<feature type="region of interest" description="Disordered" evidence="3">
    <location>
        <begin position="544"/>
        <end position="578"/>
    </location>
</feature>
<feature type="compositionally biased region" description="Polar residues" evidence="3">
    <location>
        <begin position="94"/>
        <end position="117"/>
    </location>
</feature>
<feature type="compositionally biased region" description="Polar residues" evidence="3">
    <location>
        <begin position="162"/>
        <end position="178"/>
    </location>
</feature>
<feature type="compositionally biased region" description="Low complexity" evidence="3">
    <location>
        <begin position="219"/>
        <end position="231"/>
    </location>
</feature>
<feature type="compositionally biased region" description="Polar residues" evidence="3">
    <location>
        <begin position="246"/>
        <end position="264"/>
    </location>
</feature>
<feature type="compositionally biased region" description="Low complexity" evidence="3">
    <location>
        <begin position="280"/>
        <end position="289"/>
    </location>
</feature>
<feature type="compositionally biased region" description="Polar residues" evidence="3">
    <location>
        <begin position="290"/>
        <end position="314"/>
    </location>
</feature>
<feature type="compositionally biased region" description="Low complexity" evidence="3">
    <location>
        <begin position="315"/>
        <end position="329"/>
    </location>
</feature>
<feature type="compositionally biased region" description="Polar residues" evidence="3">
    <location>
        <begin position="330"/>
        <end position="348"/>
    </location>
</feature>
<feature type="compositionally biased region" description="Basic and acidic residues" evidence="3">
    <location>
        <begin position="569"/>
        <end position="578"/>
    </location>
</feature>
<feature type="modified residue" description="Phosphothreonine" evidence="5">
    <location>
        <position position="566"/>
    </location>
</feature>
<protein>
    <recommendedName>
        <fullName>Uncharacterized ubiquitin-like protein C1E8.02</fullName>
    </recommendedName>
</protein>
<accession>O42967</accession>
<keyword id="KW-0256">Endoplasmic reticulum</keyword>
<keyword id="KW-0472">Membrane</keyword>
<keyword id="KW-0597">Phosphoprotein</keyword>
<keyword id="KW-1185">Reference proteome</keyword>
<keyword id="KW-0812">Transmembrane</keyword>
<keyword id="KW-1133">Transmembrane helix</keyword>
<proteinExistence type="evidence at protein level"/>
<sequence length="603" mass="66567">MSEYRIRVTTVDQKVGIFQVPRTKTVLELKELIAVTFEAPADRLKLIHAGRVLRNETPLEEILHDATDLVTFHLVIAVFNSTSTTLPSATSSSVPQSRTSELSSTNSIPTPRITSLNPEELSRRERAQRLLQTYNSFHGSGLGGLFPNIHRELESHGFSLPTHEQSSPVAESLDNSVSSALSPHLETLRRRNLSIHHQHIQAHEMAQESLETRNPGNISSSSAPLASDQSPTVSSNHIHASGNLALGSNSGLNPRSPNSFSSPLDNPALHTVDSTNVNGSLSPLSNSSSINQVHQNETHGSTISVPNPNLSQMGPSHSSSVPSNLSPNPAQNENPSTTSIPSINNQPFPSGLSASNSNFASSSFIPQSVPQLLPIYYQTIFYNGNYYLQQLPSASPPTMFRDHSFAPLVSPSIVSPYGVLENEETGECAFLFSPNASQPHFQPRAPTFGIPRNVRSLFTLPFFHTIRNIERHFRLFIRLALFCVLTTYNVSLSQTILLTSIMSVVFLLQTGALAPFINDNPLIQSGMRHIRNLQDEYRRRRNRTAQRVVEIPNETQTEDEQDGTNTPDNRADAEERELTRSQRIYRTVVRTIVAFALSFVPRA</sequence>